<protein>
    <recommendedName>
        <fullName evidence="1">Ribonuclease H</fullName>
        <shortName evidence="1">RNase H</shortName>
        <ecNumber evidence="1">3.1.26.4</ecNumber>
    </recommendedName>
</protein>
<gene>
    <name evidence="1" type="primary">rnhA</name>
    <name type="ordered locus">Rru_A3054</name>
</gene>
<name>RNH_RHORT</name>
<reference key="1">
    <citation type="journal article" date="2011" name="Stand. Genomic Sci.">
        <title>Complete genome sequence of Rhodospirillum rubrum type strain (S1).</title>
        <authorList>
            <person name="Munk A.C."/>
            <person name="Copeland A."/>
            <person name="Lucas S."/>
            <person name="Lapidus A."/>
            <person name="Del Rio T.G."/>
            <person name="Barry K."/>
            <person name="Detter J.C."/>
            <person name="Hammon N."/>
            <person name="Israni S."/>
            <person name="Pitluck S."/>
            <person name="Brettin T."/>
            <person name="Bruce D."/>
            <person name="Han C."/>
            <person name="Tapia R."/>
            <person name="Gilna P."/>
            <person name="Schmutz J."/>
            <person name="Larimer F."/>
            <person name="Land M."/>
            <person name="Kyrpides N.C."/>
            <person name="Mavromatis K."/>
            <person name="Richardson P."/>
            <person name="Rohde M."/>
            <person name="Goeker M."/>
            <person name="Klenk H.P."/>
            <person name="Zhang Y."/>
            <person name="Roberts G.P."/>
            <person name="Reslewic S."/>
            <person name="Schwartz D.C."/>
        </authorList>
    </citation>
    <scope>NUCLEOTIDE SEQUENCE [LARGE SCALE GENOMIC DNA]</scope>
    <source>
        <strain>ATCC 11170 / ATH 1.1.1 / DSM 467 / LMG 4362 / NCIMB 8255 / S1</strain>
    </source>
</reference>
<accession>Q2RPU6</accession>
<sequence length="166" mass="18483">MSAAAGDEIKRVRVDMFTDGACSGNPGPGGWGTILRWGDTEKELWGGETPTTNNRMELMAVIRGLEALRRPVTVTIHTDSRYVHDGITGWIHGWKRNGWKTAAKKPVKNEDLWRRLDAALGTHDISWQWVRGHSGHVENERADELARRGTSEARQGKVDGQSSTIL</sequence>
<comment type="function">
    <text evidence="1">Endonuclease that specifically degrades the RNA of RNA-DNA hybrids.</text>
</comment>
<comment type="catalytic activity">
    <reaction evidence="1">
        <text>Endonucleolytic cleavage to 5'-phosphomonoester.</text>
        <dbReference type="EC" id="3.1.26.4"/>
    </reaction>
</comment>
<comment type="cofactor">
    <cofactor evidence="1">
        <name>Mg(2+)</name>
        <dbReference type="ChEBI" id="CHEBI:18420"/>
    </cofactor>
    <text evidence="1">Binds 1 Mg(2+) ion per subunit. May bind a second metal ion at a regulatory site, or after substrate binding.</text>
</comment>
<comment type="subunit">
    <text evidence="1">Monomer.</text>
</comment>
<comment type="subcellular location">
    <subcellularLocation>
        <location evidence="1">Cytoplasm</location>
    </subcellularLocation>
</comment>
<comment type="similarity">
    <text evidence="1">Belongs to the RNase H family.</text>
</comment>
<dbReference type="EC" id="3.1.26.4" evidence="1"/>
<dbReference type="EMBL" id="CP000230">
    <property type="protein sequence ID" value="ABC23849.1"/>
    <property type="molecule type" value="Genomic_DNA"/>
</dbReference>
<dbReference type="RefSeq" id="WP_011390802.1">
    <property type="nucleotide sequence ID" value="NC_007643.1"/>
</dbReference>
<dbReference type="RefSeq" id="YP_428136.1">
    <property type="nucleotide sequence ID" value="NC_007643.1"/>
</dbReference>
<dbReference type="SMR" id="Q2RPU6"/>
<dbReference type="STRING" id="269796.Rru_A3054"/>
<dbReference type="EnsemblBacteria" id="ABC23849">
    <property type="protein sequence ID" value="ABC23849"/>
    <property type="gene ID" value="Rru_A3054"/>
</dbReference>
<dbReference type="KEGG" id="rru:Rru_A3054"/>
<dbReference type="PATRIC" id="fig|269796.9.peg.3165"/>
<dbReference type="eggNOG" id="COG0328">
    <property type="taxonomic scope" value="Bacteria"/>
</dbReference>
<dbReference type="HOGENOM" id="CLU_030894_6_0_5"/>
<dbReference type="PhylomeDB" id="Q2RPU6"/>
<dbReference type="Proteomes" id="UP000001929">
    <property type="component" value="Chromosome"/>
</dbReference>
<dbReference type="GO" id="GO:0005737">
    <property type="term" value="C:cytoplasm"/>
    <property type="evidence" value="ECO:0007669"/>
    <property type="project" value="UniProtKB-SubCell"/>
</dbReference>
<dbReference type="GO" id="GO:0000287">
    <property type="term" value="F:magnesium ion binding"/>
    <property type="evidence" value="ECO:0007669"/>
    <property type="project" value="UniProtKB-UniRule"/>
</dbReference>
<dbReference type="GO" id="GO:0003676">
    <property type="term" value="F:nucleic acid binding"/>
    <property type="evidence" value="ECO:0007669"/>
    <property type="project" value="InterPro"/>
</dbReference>
<dbReference type="GO" id="GO:0004523">
    <property type="term" value="F:RNA-DNA hybrid ribonuclease activity"/>
    <property type="evidence" value="ECO:0007669"/>
    <property type="project" value="UniProtKB-UniRule"/>
</dbReference>
<dbReference type="GO" id="GO:0043137">
    <property type="term" value="P:DNA replication, removal of RNA primer"/>
    <property type="evidence" value="ECO:0007669"/>
    <property type="project" value="TreeGrafter"/>
</dbReference>
<dbReference type="CDD" id="cd09278">
    <property type="entry name" value="RNase_HI_prokaryote_like"/>
    <property type="match status" value="1"/>
</dbReference>
<dbReference type="FunFam" id="3.30.420.10:FF:000089">
    <property type="entry name" value="Ribonuclease H"/>
    <property type="match status" value="1"/>
</dbReference>
<dbReference type="Gene3D" id="3.30.420.10">
    <property type="entry name" value="Ribonuclease H-like superfamily/Ribonuclease H"/>
    <property type="match status" value="1"/>
</dbReference>
<dbReference type="HAMAP" id="MF_00042">
    <property type="entry name" value="RNase_H"/>
    <property type="match status" value="1"/>
</dbReference>
<dbReference type="InterPro" id="IPR050092">
    <property type="entry name" value="RNase_H"/>
</dbReference>
<dbReference type="InterPro" id="IPR012337">
    <property type="entry name" value="RNaseH-like_sf"/>
</dbReference>
<dbReference type="InterPro" id="IPR002156">
    <property type="entry name" value="RNaseH_domain"/>
</dbReference>
<dbReference type="InterPro" id="IPR036397">
    <property type="entry name" value="RNaseH_sf"/>
</dbReference>
<dbReference type="InterPro" id="IPR022892">
    <property type="entry name" value="RNaseHI"/>
</dbReference>
<dbReference type="NCBIfam" id="NF001236">
    <property type="entry name" value="PRK00203.1"/>
    <property type="match status" value="1"/>
</dbReference>
<dbReference type="PANTHER" id="PTHR10642">
    <property type="entry name" value="RIBONUCLEASE H1"/>
    <property type="match status" value="1"/>
</dbReference>
<dbReference type="PANTHER" id="PTHR10642:SF26">
    <property type="entry name" value="RIBONUCLEASE H1"/>
    <property type="match status" value="1"/>
</dbReference>
<dbReference type="Pfam" id="PF00075">
    <property type="entry name" value="RNase_H"/>
    <property type="match status" value="1"/>
</dbReference>
<dbReference type="SUPFAM" id="SSF53098">
    <property type="entry name" value="Ribonuclease H-like"/>
    <property type="match status" value="1"/>
</dbReference>
<dbReference type="PROSITE" id="PS50879">
    <property type="entry name" value="RNASE_H_1"/>
    <property type="match status" value="1"/>
</dbReference>
<evidence type="ECO:0000255" key="1">
    <source>
        <dbReference type="HAMAP-Rule" id="MF_00042"/>
    </source>
</evidence>
<evidence type="ECO:0000255" key="2">
    <source>
        <dbReference type="PROSITE-ProRule" id="PRU00408"/>
    </source>
</evidence>
<evidence type="ECO:0000256" key="3">
    <source>
        <dbReference type="SAM" id="MobiDB-lite"/>
    </source>
</evidence>
<proteinExistence type="inferred from homology"/>
<feature type="chain" id="PRO_0000332669" description="Ribonuclease H">
    <location>
        <begin position="1"/>
        <end position="166"/>
    </location>
</feature>
<feature type="domain" description="RNase H type-1" evidence="2">
    <location>
        <begin position="10"/>
        <end position="151"/>
    </location>
</feature>
<feature type="region of interest" description="Disordered" evidence="3">
    <location>
        <begin position="145"/>
        <end position="166"/>
    </location>
</feature>
<feature type="compositionally biased region" description="Basic and acidic residues" evidence="3">
    <location>
        <begin position="145"/>
        <end position="157"/>
    </location>
</feature>
<feature type="binding site" evidence="1">
    <location>
        <position position="19"/>
    </location>
    <ligand>
        <name>Mg(2+)</name>
        <dbReference type="ChEBI" id="CHEBI:18420"/>
        <label>1</label>
    </ligand>
</feature>
<feature type="binding site" evidence="1">
    <location>
        <position position="19"/>
    </location>
    <ligand>
        <name>Mg(2+)</name>
        <dbReference type="ChEBI" id="CHEBI:18420"/>
        <label>2</label>
    </ligand>
</feature>
<feature type="binding site" evidence="1">
    <location>
        <position position="57"/>
    </location>
    <ligand>
        <name>Mg(2+)</name>
        <dbReference type="ChEBI" id="CHEBI:18420"/>
        <label>1</label>
    </ligand>
</feature>
<feature type="binding site" evidence="1">
    <location>
        <position position="79"/>
    </location>
    <ligand>
        <name>Mg(2+)</name>
        <dbReference type="ChEBI" id="CHEBI:18420"/>
        <label>1</label>
    </ligand>
</feature>
<feature type="binding site" evidence="1">
    <location>
        <position position="143"/>
    </location>
    <ligand>
        <name>Mg(2+)</name>
        <dbReference type="ChEBI" id="CHEBI:18420"/>
        <label>2</label>
    </ligand>
</feature>
<organism>
    <name type="scientific">Rhodospirillum rubrum (strain ATCC 11170 / ATH 1.1.1 / DSM 467 / LMG 4362 / NCIMB 8255 / S1)</name>
    <dbReference type="NCBI Taxonomy" id="269796"/>
    <lineage>
        <taxon>Bacteria</taxon>
        <taxon>Pseudomonadati</taxon>
        <taxon>Pseudomonadota</taxon>
        <taxon>Alphaproteobacteria</taxon>
        <taxon>Rhodospirillales</taxon>
        <taxon>Rhodospirillaceae</taxon>
        <taxon>Rhodospirillum</taxon>
    </lineage>
</organism>
<keyword id="KW-0963">Cytoplasm</keyword>
<keyword id="KW-0255">Endonuclease</keyword>
<keyword id="KW-0378">Hydrolase</keyword>
<keyword id="KW-0460">Magnesium</keyword>
<keyword id="KW-0479">Metal-binding</keyword>
<keyword id="KW-0540">Nuclease</keyword>
<keyword id="KW-1185">Reference proteome</keyword>